<proteinExistence type="evidence at transcript level"/>
<gene>
    <name evidence="2" type="primary">pgap3</name>
    <name type="synonym">perld1</name>
</gene>
<reference key="1">
    <citation type="submission" date="2004-08" db="EMBL/GenBank/DDBJ databases">
        <authorList>
            <consortium name="NIH - Xenopus Gene Collection (XGC) project"/>
        </authorList>
    </citation>
    <scope>NUCLEOTIDE SEQUENCE [LARGE SCALE MRNA]</scope>
    <source>
        <tissue>Eye</tissue>
    </source>
</reference>
<organism>
    <name type="scientific">Xenopus laevis</name>
    <name type="common">African clawed frog</name>
    <dbReference type="NCBI Taxonomy" id="8355"/>
    <lineage>
        <taxon>Eukaryota</taxon>
        <taxon>Metazoa</taxon>
        <taxon>Chordata</taxon>
        <taxon>Craniata</taxon>
        <taxon>Vertebrata</taxon>
        <taxon>Euteleostomi</taxon>
        <taxon>Amphibia</taxon>
        <taxon>Batrachia</taxon>
        <taxon>Anura</taxon>
        <taxon>Pipoidea</taxon>
        <taxon>Pipidae</taxon>
        <taxon>Xenopodinae</taxon>
        <taxon>Xenopus</taxon>
        <taxon>Xenopus</taxon>
    </lineage>
</organism>
<accession>Q68EV0</accession>
<evidence type="ECO:0000250" key="1">
    <source>
        <dbReference type="UniProtKB" id="A2V7M9"/>
    </source>
</evidence>
<evidence type="ECO:0000250" key="2">
    <source>
        <dbReference type="UniProtKB" id="Q96FM1"/>
    </source>
</evidence>
<evidence type="ECO:0000255" key="3"/>
<evidence type="ECO:0000305" key="4"/>
<protein>
    <recommendedName>
        <fullName evidence="2">GPI-specific phospholipase A2-like PGAP3</fullName>
        <ecNumber evidence="1">3.1.1.-</ecNumber>
    </recommendedName>
    <alternativeName>
        <fullName>PER1-like domain-containing protein 1</fullName>
    </alternativeName>
    <alternativeName>
        <fullName>Post-GPI attachment to proteins factor 3</fullName>
    </alternativeName>
</protein>
<dbReference type="EC" id="3.1.1.-" evidence="1"/>
<dbReference type="EMBL" id="BC080100">
    <property type="protein sequence ID" value="AAH80100.1"/>
    <property type="molecule type" value="mRNA"/>
</dbReference>
<dbReference type="RefSeq" id="NP_001087556.1">
    <property type="nucleotide sequence ID" value="NM_001094087.1"/>
</dbReference>
<dbReference type="GlyCosmos" id="Q68EV0">
    <property type="glycosylation" value="1 site, No reported glycans"/>
</dbReference>
<dbReference type="DNASU" id="447380"/>
<dbReference type="GeneID" id="447380"/>
<dbReference type="KEGG" id="xla:447380"/>
<dbReference type="AGR" id="Xenbase:XB-GENE-947222"/>
<dbReference type="CTD" id="447380"/>
<dbReference type="Xenbase" id="XB-GENE-947222">
    <property type="gene designation" value="pgap3.L"/>
</dbReference>
<dbReference type="OrthoDB" id="419770at2759"/>
<dbReference type="Proteomes" id="UP000186698">
    <property type="component" value="Chromosome 9_10L"/>
</dbReference>
<dbReference type="Bgee" id="447380">
    <property type="expression patterns" value="Expressed in testis and 19 other cell types or tissues"/>
</dbReference>
<dbReference type="GO" id="GO:0005789">
    <property type="term" value="C:endoplasmic reticulum membrane"/>
    <property type="evidence" value="ECO:0000250"/>
    <property type="project" value="UniProtKB"/>
</dbReference>
<dbReference type="GO" id="GO:0000139">
    <property type="term" value="C:Golgi membrane"/>
    <property type="evidence" value="ECO:0007669"/>
    <property type="project" value="UniProtKB-SubCell"/>
</dbReference>
<dbReference type="GO" id="GO:0016788">
    <property type="term" value="F:hydrolase activity, acting on ester bonds"/>
    <property type="evidence" value="ECO:0000250"/>
    <property type="project" value="UniProtKB"/>
</dbReference>
<dbReference type="GO" id="GO:0006506">
    <property type="term" value="P:GPI anchor biosynthetic process"/>
    <property type="evidence" value="ECO:0000318"/>
    <property type="project" value="GO_Central"/>
</dbReference>
<dbReference type="GO" id="GO:0006505">
    <property type="term" value="P:GPI anchor metabolic process"/>
    <property type="evidence" value="ECO:0000250"/>
    <property type="project" value="UniProtKB"/>
</dbReference>
<dbReference type="InterPro" id="IPR007217">
    <property type="entry name" value="Per1-like"/>
</dbReference>
<dbReference type="PANTHER" id="PTHR13148">
    <property type="entry name" value="PER1-RELATED"/>
    <property type="match status" value="1"/>
</dbReference>
<dbReference type="PANTHER" id="PTHR13148:SF0">
    <property type="entry name" value="POST-GPI ATTACHMENT TO PROTEINS FACTOR 3"/>
    <property type="match status" value="1"/>
</dbReference>
<dbReference type="Pfam" id="PF04080">
    <property type="entry name" value="Per1"/>
    <property type="match status" value="1"/>
</dbReference>
<sequence>MAPFLVLFLAGVVSASRGDREPVYRDCVTVCDQNNCTGFRLRDFRAQQPLYMRLTGWTCLDDCRYKCMWYTVSLYLKEGHEVPQFHGKWPFSRFLFFQEPASALASFLNGVASLLMLFRYRSSVPSSCQMYRTCLAFSMVSVNAWFWSTIFHTRDTALTEKMDYFCASSVILHSIYLCCMRTFGLQYPSIANAFGAFLVLLFACHISYLTLGRFDYSYNMAANTSFGIVNLMWWLAWCMWRRFHQPYLWKCVLVVVLLQSLALLELLDFPPVMWILDAHALWHFSTIPLHFLFYSFLRDDSLYLLKVNHDDDIPKLD</sequence>
<comment type="function">
    <text evidence="1">Involved in the fatty acid remodeling steps of GPI-anchor maturation where the unsaturated acyl chain at sn-2 of inositol phosphate is replaced by a saturated stearoyl chain. May catalyze the first step of the fatty acid remodeling, by removing the unsaturated acyl chain at sn-2 of inositol phosphate, generating a lyso-GPI intermediate. The fatty acid remodeling steps is critical for the integration of GPI-APs into lipid rafts.</text>
</comment>
<comment type="subcellular location">
    <subcellularLocation>
        <location evidence="1">Golgi apparatus membrane</location>
        <topology evidence="3">Multi-pass membrane protein</topology>
    </subcellularLocation>
</comment>
<comment type="similarity">
    <text evidence="4">Belongs to the PGAP3 family.</text>
</comment>
<keyword id="KW-0325">Glycoprotein</keyword>
<keyword id="KW-0333">Golgi apparatus</keyword>
<keyword id="KW-0337">GPI-anchor biosynthesis</keyword>
<keyword id="KW-0378">Hydrolase</keyword>
<keyword id="KW-0472">Membrane</keyword>
<keyword id="KW-1185">Reference proteome</keyword>
<keyword id="KW-0732">Signal</keyword>
<keyword id="KW-0812">Transmembrane</keyword>
<keyword id="KW-1133">Transmembrane helix</keyword>
<name>PGAP3_XENLA</name>
<feature type="signal peptide" evidence="3">
    <location>
        <begin position="1"/>
        <end position="18"/>
    </location>
</feature>
<feature type="chain" id="PRO_0000339359" description="GPI-specific phospholipase A2-like PGAP3">
    <location>
        <begin position="19"/>
        <end position="317"/>
    </location>
</feature>
<feature type="topological domain" description="Lumenal" evidence="3">
    <location>
        <begin position="19"/>
        <end position="93"/>
    </location>
</feature>
<feature type="transmembrane region" description="Helical" evidence="3">
    <location>
        <begin position="94"/>
        <end position="114"/>
    </location>
</feature>
<feature type="topological domain" description="Cytoplasmic" evidence="3">
    <location>
        <begin position="115"/>
        <end position="132"/>
    </location>
</feature>
<feature type="transmembrane region" description="Helical" evidence="3">
    <location>
        <begin position="133"/>
        <end position="153"/>
    </location>
</feature>
<feature type="topological domain" description="Lumenal" evidence="3">
    <location>
        <begin position="154"/>
        <end position="163"/>
    </location>
</feature>
<feature type="transmembrane region" description="Helical" evidence="3">
    <location>
        <begin position="164"/>
        <end position="180"/>
    </location>
</feature>
<feature type="topological domain" description="Cytoplasmic" evidence="3">
    <location>
        <begin position="181"/>
        <end position="189"/>
    </location>
</feature>
<feature type="transmembrane region" description="Helical" evidence="3">
    <location>
        <begin position="190"/>
        <end position="210"/>
    </location>
</feature>
<feature type="topological domain" description="Lumenal" evidence="3">
    <location>
        <begin position="211"/>
        <end position="219"/>
    </location>
</feature>
<feature type="transmembrane region" description="Helical" evidence="3">
    <location>
        <begin position="220"/>
        <end position="240"/>
    </location>
</feature>
<feature type="topological domain" description="Cytoplasmic" evidence="3">
    <location>
        <begin position="241"/>
        <end position="251"/>
    </location>
</feature>
<feature type="transmembrane region" description="Helical" evidence="3">
    <location>
        <begin position="252"/>
        <end position="272"/>
    </location>
</feature>
<feature type="topological domain" description="Lumenal" evidence="3">
    <location>
        <position position="273"/>
    </location>
</feature>
<feature type="transmembrane region" description="Helical" evidence="3">
    <location>
        <begin position="274"/>
        <end position="293"/>
    </location>
</feature>
<feature type="topological domain" description="Cytoplasmic" evidence="3">
    <location>
        <begin position="294"/>
        <end position="317"/>
    </location>
</feature>
<feature type="glycosylation site" description="N-linked (GlcNAc...) asparagine" evidence="3">
    <location>
        <position position="35"/>
    </location>
</feature>